<accession>A6MMH7</accession>
<reference key="1">
    <citation type="journal article" date="2007" name="Mol. Phylogenet. Evol.">
        <title>Phylogenetic and evolutionary implications of complete chloroplast genome sequences of four early-diverging angiosperms: Buxus (Buxaceae), Chloranthus (Chloranthaceae), Dioscorea (Dioscoreaceae), and Illicium (Schisandraceae).</title>
        <authorList>
            <person name="Hansen D.R."/>
            <person name="Dastidar S.G."/>
            <person name="Cai Z."/>
            <person name="Penaflor C."/>
            <person name="Kuehl J.V."/>
            <person name="Boore J.L."/>
            <person name="Jansen R.K."/>
        </authorList>
    </citation>
    <scope>NUCLEOTIDE SEQUENCE [LARGE SCALE GENOMIC DNA]</scope>
</reference>
<comment type="catalytic activity">
    <reaction evidence="1">
        <text>a plastoquinone + NADH + (n+1) H(+)(in) = a plastoquinol + NAD(+) + n H(+)(out)</text>
        <dbReference type="Rhea" id="RHEA:42608"/>
        <dbReference type="Rhea" id="RHEA-COMP:9561"/>
        <dbReference type="Rhea" id="RHEA-COMP:9562"/>
        <dbReference type="ChEBI" id="CHEBI:15378"/>
        <dbReference type="ChEBI" id="CHEBI:17757"/>
        <dbReference type="ChEBI" id="CHEBI:57540"/>
        <dbReference type="ChEBI" id="CHEBI:57945"/>
        <dbReference type="ChEBI" id="CHEBI:62192"/>
    </reaction>
</comment>
<comment type="catalytic activity">
    <reaction evidence="1">
        <text>a plastoquinone + NADPH + (n+1) H(+)(in) = a plastoquinol + NADP(+) + n H(+)(out)</text>
        <dbReference type="Rhea" id="RHEA:42612"/>
        <dbReference type="Rhea" id="RHEA-COMP:9561"/>
        <dbReference type="Rhea" id="RHEA-COMP:9562"/>
        <dbReference type="ChEBI" id="CHEBI:15378"/>
        <dbReference type="ChEBI" id="CHEBI:17757"/>
        <dbReference type="ChEBI" id="CHEBI:57783"/>
        <dbReference type="ChEBI" id="CHEBI:58349"/>
        <dbReference type="ChEBI" id="CHEBI:62192"/>
    </reaction>
</comment>
<comment type="subcellular location">
    <subcellularLocation>
        <location evidence="1">Plastid</location>
        <location evidence="1">Chloroplast thylakoid membrane</location>
        <topology evidence="1">Multi-pass membrane protein</topology>
    </subcellularLocation>
</comment>
<comment type="similarity">
    <text evidence="1">Belongs to the complex I subunit 4 family.</text>
</comment>
<geneLocation type="chloroplast"/>
<keyword id="KW-0150">Chloroplast</keyword>
<keyword id="KW-0472">Membrane</keyword>
<keyword id="KW-0520">NAD</keyword>
<keyword id="KW-0521">NADP</keyword>
<keyword id="KW-0934">Plastid</keyword>
<keyword id="KW-0618">Plastoquinone</keyword>
<keyword id="KW-0874">Quinone</keyword>
<keyword id="KW-0793">Thylakoid</keyword>
<keyword id="KW-1278">Translocase</keyword>
<keyword id="KW-0812">Transmembrane</keyword>
<keyword id="KW-1133">Transmembrane helix</keyword>
<proteinExistence type="inferred from homology"/>
<dbReference type="EC" id="7.1.1.-" evidence="1"/>
<dbReference type="EMBL" id="EF380352">
    <property type="protein sequence ID" value="ABQ43314.1"/>
    <property type="molecule type" value="Genomic_DNA"/>
</dbReference>
<dbReference type="RefSeq" id="YP_001294153.1">
    <property type="nucleotide sequence ID" value="NC_009598.1"/>
</dbReference>
<dbReference type="SMR" id="A6MMH7"/>
<dbReference type="GeneID" id="5236507"/>
<dbReference type="GO" id="GO:0009535">
    <property type="term" value="C:chloroplast thylakoid membrane"/>
    <property type="evidence" value="ECO:0007669"/>
    <property type="project" value="UniProtKB-SubCell"/>
</dbReference>
<dbReference type="GO" id="GO:0008137">
    <property type="term" value="F:NADH dehydrogenase (ubiquinone) activity"/>
    <property type="evidence" value="ECO:0007669"/>
    <property type="project" value="InterPro"/>
</dbReference>
<dbReference type="GO" id="GO:0048039">
    <property type="term" value="F:ubiquinone binding"/>
    <property type="evidence" value="ECO:0007669"/>
    <property type="project" value="TreeGrafter"/>
</dbReference>
<dbReference type="GO" id="GO:0042773">
    <property type="term" value="P:ATP synthesis coupled electron transport"/>
    <property type="evidence" value="ECO:0007669"/>
    <property type="project" value="InterPro"/>
</dbReference>
<dbReference type="GO" id="GO:0015990">
    <property type="term" value="P:electron transport coupled proton transport"/>
    <property type="evidence" value="ECO:0007669"/>
    <property type="project" value="TreeGrafter"/>
</dbReference>
<dbReference type="HAMAP" id="MF_00491">
    <property type="entry name" value="NDH1_NuoM"/>
    <property type="match status" value="1"/>
</dbReference>
<dbReference type="InterPro" id="IPR022997">
    <property type="entry name" value="NADH_Q_OxRdtase_chain4"/>
</dbReference>
<dbReference type="InterPro" id="IPR010227">
    <property type="entry name" value="NADH_Q_OxRdtase_chainM/4"/>
</dbReference>
<dbReference type="InterPro" id="IPR003918">
    <property type="entry name" value="NADH_UbQ_OxRdtase"/>
</dbReference>
<dbReference type="InterPro" id="IPR001750">
    <property type="entry name" value="ND/Mrp_TM"/>
</dbReference>
<dbReference type="NCBIfam" id="TIGR01972">
    <property type="entry name" value="NDH_I_M"/>
    <property type="match status" value="1"/>
</dbReference>
<dbReference type="PANTHER" id="PTHR43507:SF21">
    <property type="entry name" value="NAD(P)H-QUINONE OXIDOREDUCTASE CHAIN 4, CHLOROPLASTIC"/>
    <property type="match status" value="1"/>
</dbReference>
<dbReference type="PANTHER" id="PTHR43507">
    <property type="entry name" value="NADH-UBIQUINONE OXIDOREDUCTASE CHAIN 4"/>
    <property type="match status" value="1"/>
</dbReference>
<dbReference type="Pfam" id="PF00361">
    <property type="entry name" value="Proton_antipo_M"/>
    <property type="match status" value="1"/>
</dbReference>
<dbReference type="PRINTS" id="PR01437">
    <property type="entry name" value="NUOXDRDTASE4"/>
</dbReference>
<feature type="chain" id="PRO_0000343278" description="NAD(P)H-quinone oxidoreductase chain 4, chloroplastic">
    <location>
        <begin position="1"/>
        <end position="500"/>
    </location>
</feature>
<feature type="transmembrane region" description="Helical" evidence="1">
    <location>
        <begin position="4"/>
        <end position="24"/>
    </location>
</feature>
<feature type="transmembrane region" description="Helical" evidence="1">
    <location>
        <begin position="37"/>
        <end position="57"/>
    </location>
</feature>
<feature type="transmembrane region" description="Helical" evidence="1">
    <location>
        <begin position="84"/>
        <end position="104"/>
    </location>
</feature>
<feature type="transmembrane region" description="Helical" evidence="1">
    <location>
        <begin position="111"/>
        <end position="129"/>
    </location>
</feature>
<feature type="transmembrane region" description="Helical" evidence="1">
    <location>
        <begin position="134"/>
        <end position="154"/>
    </location>
</feature>
<feature type="transmembrane region" description="Helical" evidence="1">
    <location>
        <begin position="167"/>
        <end position="187"/>
    </location>
</feature>
<feature type="transmembrane region" description="Helical" evidence="1">
    <location>
        <begin position="208"/>
        <end position="228"/>
    </location>
</feature>
<feature type="transmembrane region" description="Helical" evidence="1">
    <location>
        <begin position="242"/>
        <end position="262"/>
    </location>
</feature>
<feature type="transmembrane region" description="Helical" evidence="1">
    <location>
        <begin position="272"/>
        <end position="292"/>
    </location>
</feature>
<feature type="transmembrane region" description="Helical" evidence="1">
    <location>
        <begin position="305"/>
        <end position="325"/>
    </location>
</feature>
<feature type="transmembrane region" description="Helical" evidence="1">
    <location>
        <begin position="330"/>
        <end position="350"/>
    </location>
</feature>
<feature type="transmembrane region" description="Helical" evidence="1">
    <location>
        <begin position="374"/>
        <end position="396"/>
    </location>
</feature>
<feature type="transmembrane region" description="Helical" evidence="1">
    <location>
        <begin position="411"/>
        <end position="431"/>
    </location>
</feature>
<feature type="transmembrane region" description="Helical" evidence="1">
    <location>
        <begin position="462"/>
        <end position="482"/>
    </location>
</feature>
<protein>
    <recommendedName>
        <fullName evidence="1">NAD(P)H-quinone oxidoreductase chain 4, chloroplastic</fullName>
        <ecNumber evidence="1">7.1.1.-</ecNumber>
    </recommendedName>
    <alternativeName>
        <fullName evidence="1">NAD(P)H dehydrogenase, chain 4</fullName>
    </alternativeName>
    <alternativeName>
        <fullName evidence="1">NADH-plastoquinone oxidoreductase chain 4</fullName>
    </alternativeName>
</protein>
<gene>
    <name evidence="1" type="primary">ndhD</name>
</gene>
<organism>
    <name type="scientific">Chloranthus spicatus</name>
    <name type="common">Chulantree</name>
    <name type="synonym">Nigrina spicata</name>
    <dbReference type="NCBI Taxonomy" id="13006"/>
    <lineage>
        <taxon>Eukaryota</taxon>
        <taxon>Viridiplantae</taxon>
        <taxon>Streptophyta</taxon>
        <taxon>Embryophyta</taxon>
        <taxon>Tracheophyta</taxon>
        <taxon>Spermatophyta</taxon>
        <taxon>Magnoliopsida</taxon>
        <taxon>Chloranthales</taxon>
        <taxon>Chloranthaceae</taxon>
        <taxon>Chloranthus</taxon>
    </lineage>
</organism>
<name>NU4C_CHLSC</name>
<sequence>MSSFPWLTIIVVLPIFAGSSIFFLPHRGNKIVRWYTICICLLELLLTTYTFCYHFQLDDPLIQLEEDYKWINIFDFHWRLGIDGLSIGPILLTGFITTLATLAARPVTRDSRLFHFLMLAMYSGQIGSFSSRDLLLFFIMWELELIPVYLLLSMWGGKKRLYSATKFILYTAGGSIFLLMGIPGMGLYGSNQPPFNFETSANQSYPVALEILFYFGFLIAYAVKSPIIPLHTWLPDTHGEAHYSTCMLLAGILLKMGAYGLVRINMELLPHAHSIFSPWLMIVGTIQVIYAASTSPGQRNLKKRIAYSSVSHMAFIIIGIGSITDTGLNGAILQIISHGFIGAALFFLAGTSYDRIRLIYLDEMGGIAIPMPKIFTMFSSFSMASLALPGMSGFVAESIVFFGIITSPKYFFMPKILITFVMAIGMILTPIYSLSMSRQMFYGYKLFNVPNSYFVDSGPRELFVSICIFLPVIGIGIYPDFVLSLSVDKVEAILSNYFHR</sequence>
<evidence type="ECO:0000255" key="1">
    <source>
        <dbReference type="HAMAP-Rule" id="MF_00491"/>
    </source>
</evidence>